<keyword id="KW-0903">Direct protein sequencing</keyword>
<keyword id="KW-0256">Endoplasmic reticulum</keyword>
<keyword id="KW-0349">Heme</keyword>
<keyword id="KW-0408">Iron</keyword>
<keyword id="KW-0472">Membrane</keyword>
<keyword id="KW-0479">Metal-binding</keyword>
<keyword id="KW-0560">Oxidoreductase</keyword>
<keyword id="KW-1185">Reference proteome</keyword>
<keyword id="KW-0812">Transmembrane</keyword>
<keyword id="KW-1133">Transmembrane helix</keyword>
<accession>P14791</accession>
<dbReference type="EC" id="1.14.14.18" evidence="4 5"/>
<dbReference type="EMBL" id="X56201">
    <property type="protein sequence ID" value="CAA39661.1"/>
    <property type="molecule type" value="mRNA"/>
</dbReference>
<dbReference type="PIR" id="S15123">
    <property type="entry name" value="S15123"/>
</dbReference>
<dbReference type="RefSeq" id="NP_990675.1">
    <property type="nucleotide sequence ID" value="NM_205344.1"/>
</dbReference>
<dbReference type="SMR" id="P14791"/>
<dbReference type="FunCoup" id="P14791">
    <property type="interactions" value="49"/>
</dbReference>
<dbReference type="STRING" id="9031.ENSGALP00000036970"/>
<dbReference type="PaxDb" id="9031-ENSGALP00000036970"/>
<dbReference type="GeneID" id="396287"/>
<dbReference type="KEGG" id="gga:396287"/>
<dbReference type="CTD" id="3162"/>
<dbReference type="VEuPathDB" id="HostDB:geneid_396287"/>
<dbReference type="eggNOG" id="KOG4480">
    <property type="taxonomic scope" value="Eukaryota"/>
</dbReference>
<dbReference type="InParanoid" id="P14791"/>
<dbReference type="OrthoDB" id="652091at2759"/>
<dbReference type="PhylomeDB" id="P14791"/>
<dbReference type="SABIO-RK" id="P14791"/>
<dbReference type="PRO" id="PR:P14791"/>
<dbReference type="Proteomes" id="UP000000539">
    <property type="component" value="Unassembled WGS sequence"/>
</dbReference>
<dbReference type="GO" id="GO:0005789">
    <property type="term" value="C:endoplasmic reticulum membrane"/>
    <property type="evidence" value="ECO:0000250"/>
    <property type="project" value="UniProtKB"/>
</dbReference>
<dbReference type="GO" id="GO:0020037">
    <property type="term" value="F:heme binding"/>
    <property type="evidence" value="ECO:0000318"/>
    <property type="project" value="GO_Central"/>
</dbReference>
<dbReference type="GO" id="GO:0004392">
    <property type="term" value="F:heme oxygenase (decyclizing) activity"/>
    <property type="evidence" value="ECO:0000314"/>
    <property type="project" value="UniProtKB"/>
</dbReference>
<dbReference type="GO" id="GO:0046872">
    <property type="term" value="F:metal ion binding"/>
    <property type="evidence" value="ECO:0007669"/>
    <property type="project" value="UniProtKB-KW"/>
</dbReference>
<dbReference type="GO" id="GO:0042167">
    <property type="term" value="P:heme catabolic process"/>
    <property type="evidence" value="ECO:0000318"/>
    <property type="project" value="GO_Central"/>
</dbReference>
<dbReference type="GO" id="GO:0006788">
    <property type="term" value="P:heme oxidation"/>
    <property type="evidence" value="ECO:0000318"/>
    <property type="project" value="GO_Central"/>
</dbReference>
<dbReference type="GO" id="GO:0110076">
    <property type="term" value="P:negative regulation of ferroptosis"/>
    <property type="evidence" value="ECO:0000250"/>
    <property type="project" value="UniProtKB"/>
</dbReference>
<dbReference type="GO" id="GO:0006979">
    <property type="term" value="P:response to oxidative stress"/>
    <property type="evidence" value="ECO:0000318"/>
    <property type="project" value="GO_Central"/>
</dbReference>
<dbReference type="CDD" id="cd19165">
    <property type="entry name" value="HemeO"/>
    <property type="match status" value="1"/>
</dbReference>
<dbReference type="FunFam" id="1.20.910.10:FF:000001">
    <property type="entry name" value="Heme oxygenase 1"/>
    <property type="match status" value="1"/>
</dbReference>
<dbReference type="Gene3D" id="1.20.910.10">
    <property type="entry name" value="Heme oxygenase-like"/>
    <property type="match status" value="1"/>
</dbReference>
<dbReference type="InterPro" id="IPR002051">
    <property type="entry name" value="Haem_Oase"/>
</dbReference>
<dbReference type="InterPro" id="IPR016053">
    <property type="entry name" value="Haem_Oase-like"/>
</dbReference>
<dbReference type="InterPro" id="IPR016084">
    <property type="entry name" value="Haem_Oase-like_multi-hlx"/>
</dbReference>
<dbReference type="InterPro" id="IPR018207">
    <property type="entry name" value="Haem_oxygenase_CS"/>
</dbReference>
<dbReference type="PANTHER" id="PTHR10720">
    <property type="entry name" value="HEME OXYGENASE"/>
    <property type="match status" value="1"/>
</dbReference>
<dbReference type="PANTHER" id="PTHR10720:SF1">
    <property type="entry name" value="HEME OXYGENASE 1"/>
    <property type="match status" value="1"/>
</dbReference>
<dbReference type="Pfam" id="PF01126">
    <property type="entry name" value="Heme_oxygenase"/>
    <property type="match status" value="1"/>
</dbReference>
<dbReference type="PRINTS" id="PR00088">
    <property type="entry name" value="HAEMOXYGNASE"/>
</dbReference>
<dbReference type="SUPFAM" id="SSF48613">
    <property type="entry name" value="Heme oxygenase-like"/>
    <property type="match status" value="1"/>
</dbReference>
<dbReference type="PROSITE" id="PS00593">
    <property type="entry name" value="HEME_OXYGENASE"/>
    <property type="match status" value="1"/>
</dbReference>
<protein>
    <recommendedName>
        <fullName>Heme oxygenase 1</fullName>
        <shortName>HO-1</shortName>
        <ecNumber evidence="4 5">1.14.14.18</ecNumber>
    </recommendedName>
    <component>
        <recommendedName>
            <fullName evidence="1">Heme oxygenase 1 soluble form</fullName>
        </recommendedName>
    </component>
</protein>
<organism>
    <name type="scientific">Gallus gallus</name>
    <name type="common">Chicken</name>
    <dbReference type="NCBI Taxonomy" id="9031"/>
    <lineage>
        <taxon>Eukaryota</taxon>
        <taxon>Metazoa</taxon>
        <taxon>Chordata</taxon>
        <taxon>Craniata</taxon>
        <taxon>Vertebrata</taxon>
        <taxon>Euteleostomi</taxon>
        <taxon>Archelosauria</taxon>
        <taxon>Archosauria</taxon>
        <taxon>Dinosauria</taxon>
        <taxon>Saurischia</taxon>
        <taxon>Theropoda</taxon>
        <taxon>Coelurosauria</taxon>
        <taxon>Aves</taxon>
        <taxon>Neognathae</taxon>
        <taxon>Galloanserae</taxon>
        <taxon>Galliformes</taxon>
        <taxon>Phasianidae</taxon>
        <taxon>Phasianinae</taxon>
        <taxon>Gallus</taxon>
    </lineage>
</organism>
<feature type="chain" id="PRO_0000209696" description="Heme oxygenase 1">
    <location>
        <begin position="1"/>
        <end position="296"/>
    </location>
</feature>
<feature type="chain" id="PRO_0000455629" description="Heme oxygenase 1 soluble form" evidence="1">
    <location>
        <begin position="1"/>
        <end position="273"/>
    </location>
</feature>
<feature type="topological domain" description="Cytoplasmic" evidence="1">
    <location>
        <begin position="1"/>
        <end position="273"/>
    </location>
</feature>
<feature type="transmembrane region" description="Helical; Anchor for type IV membrane protein" evidence="2">
    <location>
        <begin position="274"/>
        <end position="296"/>
    </location>
</feature>
<feature type="region of interest" description="Disordered" evidence="3">
    <location>
        <begin position="231"/>
        <end position="264"/>
    </location>
</feature>
<feature type="compositionally biased region" description="Basic and acidic residues" evidence="3">
    <location>
        <begin position="238"/>
        <end position="250"/>
    </location>
</feature>
<feature type="binding site" evidence="1">
    <location>
        <position position="21"/>
    </location>
    <ligand>
        <name>heme b</name>
        <dbReference type="ChEBI" id="CHEBI:60344"/>
    </ligand>
</feature>
<feature type="binding site" description="axial binding residue" evidence="1">
    <location>
        <position position="28"/>
    </location>
    <ligand>
        <name>heme b</name>
        <dbReference type="ChEBI" id="CHEBI:60344"/>
    </ligand>
    <ligandPart>
        <name>Fe</name>
        <dbReference type="ChEBI" id="CHEBI:18248"/>
    </ligandPart>
</feature>
<feature type="binding site" evidence="1">
    <location>
        <position position="137"/>
    </location>
    <ligand>
        <name>heme b</name>
        <dbReference type="ChEBI" id="CHEBI:60344"/>
    </ligand>
</feature>
<feature type="binding site" evidence="1">
    <location>
        <position position="186"/>
    </location>
    <ligand>
        <name>heme b</name>
        <dbReference type="ChEBI" id="CHEBI:60344"/>
    </ligand>
</feature>
<feature type="site" description="Important for catalytic activity" evidence="1">
    <location>
        <position position="143"/>
    </location>
</feature>
<proteinExistence type="evidence at protein level"/>
<comment type="function">
    <molecule>Heme oxygenase 1</molecule>
    <text evidence="1 4 5">Catalyzes the oxidative cleavage of heme at the alpha-methene bridge carbon, released as carbon monoxide (CO), to generate biliverdin IXalpha, while releasing the central heme iron chelate as ferrous iron (PubMed:1996964, PubMed:2158889). Affords protection against programmed cell death and this cytoprotective effect relies on its ability to catabolize free heme and prevent it from sensitizing cells to undergo apoptosis (By similarity).</text>
</comment>
<comment type="function">
    <molecule>Heme oxygenase 1 soluble form</molecule>
    <text evidence="1">Catalyzes the oxidative cleavage of heme at the alpha-methene bridge carbon, released as carbon monoxide (CO), to generate biliverdin IXalpha, while releasing the central heme iron chelate as ferrous iron.</text>
</comment>
<comment type="catalytic activity">
    <reaction evidence="4 5">
        <text>heme b + 3 reduced [NADPH--hemoprotein reductase] + 3 O2 = biliverdin IXalpha + CO + Fe(2+) + 3 oxidized [NADPH--hemoprotein reductase] + 3 H2O + H(+)</text>
        <dbReference type="Rhea" id="RHEA:21764"/>
        <dbReference type="Rhea" id="RHEA-COMP:11964"/>
        <dbReference type="Rhea" id="RHEA-COMP:11965"/>
        <dbReference type="ChEBI" id="CHEBI:15377"/>
        <dbReference type="ChEBI" id="CHEBI:15378"/>
        <dbReference type="ChEBI" id="CHEBI:15379"/>
        <dbReference type="ChEBI" id="CHEBI:17245"/>
        <dbReference type="ChEBI" id="CHEBI:29033"/>
        <dbReference type="ChEBI" id="CHEBI:57618"/>
        <dbReference type="ChEBI" id="CHEBI:57991"/>
        <dbReference type="ChEBI" id="CHEBI:58210"/>
        <dbReference type="ChEBI" id="CHEBI:60344"/>
        <dbReference type="EC" id="1.14.14.18"/>
    </reaction>
    <physiologicalReaction direction="left-to-right" evidence="7">
        <dbReference type="Rhea" id="RHEA:21765"/>
    </physiologicalReaction>
</comment>
<comment type="activity regulation">
    <text evidence="5">Inhibited by metalloporphyrins in the following order of decreasing potency: tin mesoporphyrin &gt; tin protoporphyrin &gt; zinc protoporphyrin &gt; manganese protoporphyrin &gt; cobalt protoporphyrin.</text>
</comment>
<comment type="biophysicochemical properties">
    <kinetics>
        <KM evidence="5">3.8 uM for heme b</KM>
    </kinetics>
    <phDependence>
        <text evidence="5">Optimum pH is 7.4.</text>
    </phDependence>
</comment>
<comment type="subunit">
    <text evidence="1">Homodimer and higher order homooligomer. Oligomerization is crucial for its stability and function in the endoplasmic reticulum.</text>
</comment>
<comment type="subcellular location">
    <subcellularLocation>
        <location evidence="1">Endoplasmic reticulum membrane</location>
        <topology evidence="2">Single-pass type IV membrane protein</topology>
        <orientation evidence="1">Cytoplasmic side</orientation>
    </subcellularLocation>
</comment>
<comment type="domain">
    <text evidence="1">The transmembrane domain is necessary for its oligomerization.</text>
</comment>
<comment type="PTM">
    <text evidence="1">A soluble form arises by proteolytic removal of the membrane anchor.</text>
</comment>
<comment type="similarity">
    <text evidence="6">Belongs to the heme oxygenase family.</text>
</comment>
<gene>
    <name type="primary">HMOX1</name>
</gene>
<reference key="1">
    <citation type="journal article" date="1991" name="Biochem. J.">
        <title>Cloning, sequencing and expression of cDNA for chick liver haem oxygenase. Comparison of avian and mammalian cDNAs and deduced proteins.</title>
        <authorList>
            <person name="Evans C.O."/>
            <person name="Healey J.F."/>
            <person name="Greene Y."/>
            <person name="Bonkovsky H.L."/>
        </authorList>
    </citation>
    <scope>NUCLEOTIDE SEQUENCE [MRNA]</scope>
    <scope>FUNCTION</scope>
    <scope>CATALYTIC ACTIVITY</scope>
    <source>
        <tissue>Liver</tissue>
    </source>
</reference>
<reference key="2">
    <citation type="journal article" date="1990" name="Eur. J. Biochem.">
        <title>Purification and characterization of heme oxygenase from chick liver. Comparison of the avian and mammalian enzymes.</title>
        <authorList>
            <person name="Bonkovsky H.L."/>
            <person name="Healey J.F."/>
            <person name="Pohl J."/>
        </authorList>
    </citation>
    <scope>PARTIAL PROTEIN SEQUENCE</scope>
    <scope>FUNCTION</scope>
    <scope>CATALYTIC ACTIVITY</scope>
    <scope>ACTIVITY REGULATION</scope>
    <scope>BIOPHYSICOCHEMICAL PROPERTIES</scope>
    <source>
        <tissue>Liver</tissue>
    </source>
</reference>
<evidence type="ECO:0000250" key="1">
    <source>
        <dbReference type="UniProtKB" id="P09601"/>
    </source>
</evidence>
<evidence type="ECO:0000255" key="2"/>
<evidence type="ECO:0000256" key="3">
    <source>
        <dbReference type="SAM" id="MobiDB-lite"/>
    </source>
</evidence>
<evidence type="ECO:0000269" key="4">
    <source>
    </source>
</evidence>
<evidence type="ECO:0000269" key="5">
    <source>
    </source>
</evidence>
<evidence type="ECO:0000305" key="6"/>
<evidence type="ECO:0000305" key="7">
    <source>
    </source>
</evidence>
<name>HMOX1_CHICK</name>
<sequence>METSQPHNAESMSQDLSELLKEATKEVHEQAENTPFMKNFQKGQVSLHEFKLVTASLYFIYSALEEEIERNKDNPVYAPVYFPMELHRKAALEKDLEYFYGSNWRAEIPCPEATQKYVERLHVVGKKHPELLVAHAYTRYLGDLSGGQVLKKIAQKALQLPSTGEGLAFFTFDGVSNATKFKQLYRSRMNALEMDHATKKRVLEEAKKAFLLNIQVFEALQKLVSKSQENGHAVQPKAELRTRSVNKSHENSPAAGKESERTSRMQADMLTTSPLVRWLLALGFIATTVAVGLFAM</sequence>